<accession>A7ZK57</accession>
<protein>
    <recommendedName>
        <fullName evidence="1">3-hydroxydecanoyl-[acyl-carrier-protein] dehydratase</fullName>
        <ecNumber evidence="1">4.2.1.59</ecNumber>
    </recommendedName>
    <alternativeName>
        <fullName evidence="1">3-hydroxyacyl-[acyl-carrier-protein] dehydratase FabA</fullName>
    </alternativeName>
    <alternativeName>
        <fullName evidence="1">Beta-hydroxydecanoyl thioester dehydrase</fullName>
    </alternativeName>
    <alternativeName>
        <fullName evidence="1">Trans-2-decenoyl-[acyl-carrier-protein] isomerase</fullName>
        <ecNumber evidence="1">5.3.3.14</ecNumber>
    </alternativeName>
</protein>
<comment type="function">
    <text evidence="1">Necessary for the introduction of cis unsaturation into fatty acids. Catalyzes the dehydration of (3R)-3-hydroxydecanoyl-ACP to E-(2)-decenoyl-ACP and then its isomerization to Z-(3)-decenoyl-ACP. Can catalyze the dehydratase reaction for beta-hydroxyacyl-ACPs with saturated chain lengths up to 16:0, being most active on intermediate chain length.</text>
</comment>
<comment type="catalytic activity">
    <reaction evidence="1">
        <text>a (3R)-hydroxyacyl-[ACP] = a (2E)-enoyl-[ACP] + H2O</text>
        <dbReference type="Rhea" id="RHEA:13097"/>
        <dbReference type="Rhea" id="RHEA-COMP:9925"/>
        <dbReference type="Rhea" id="RHEA-COMP:9945"/>
        <dbReference type="ChEBI" id="CHEBI:15377"/>
        <dbReference type="ChEBI" id="CHEBI:78784"/>
        <dbReference type="ChEBI" id="CHEBI:78827"/>
        <dbReference type="EC" id="4.2.1.59"/>
    </reaction>
</comment>
<comment type="catalytic activity">
    <reaction evidence="1">
        <text>(3R)-hydroxydecanoyl-[ACP] = (2E)-decenoyl-[ACP] + H2O</text>
        <dbReference type="Rhea" id="RHEA:41860"/>
        <dbReference type="Rhea" id="RHEA-COMP:9638"/>
        <dbReference type="Rhea" id="RHEA-COMP:9639"/>
        <dbReference type="ChEBI" id="CHEBI:15377"/>
        <dbReference type="ChEBI" id="CHEBI:78466"/>
        <dbReference type="ChEBI" id="CHEBI:78467"/>
    </reaction>
</comment>
<comment type="catalytic activity">
    <reaction evidence="1">
        <text>(2E)-decenoyl-[ACP] = (3Z)-decenoyl-[ACP]</text>
        <dbReference type="Rhea" id="RHEA:23568"/>
        <dbReference type="Rhea" id="RHEA-COMP:9639"/>
        <dbReference type="Rhea" id="RHEA-COMP:9927"/>
        <dbReference type="ChEBI" id="CHEBI:78467"/>
        <dbReference type="ChEBI" id="CHEBI:78798"/>
        <dbReference type="EC" id="5.3.3.14"/>
    </reaction>
</comment>
<comment type="pathway">
    <text evidence="1">Lipid metabolism; fatty acid biosynthesis.</text>
</comment>
<comment type="subunit">
    <text evidence="1">Homodimer.</text>
</comment>
<comment type="subcellular location">
    <subcellularLocation>
        <location evidence="1">Cytoplasm</location>
    </subcellularLocation>
</comment>
<comment type="similarity">
    <text evidence="1">Belongs to the thioester dehydratase family. FabA subfamily.</text>
</comment>
<reference key="1">
    <citation type="journal article" date="2008" name="J. Bacteriol.">
        <title>The pangenome structure of Escherichia coli: comparative genomic analysis of E. coli commensal and pathogenic isolates.</title>
        <authorList>
            <person name="Rasko D.A."/>
            <person name="Rosovitz M.J."/>
            <person name="Myers G.S.A."/>
            <person name="Mongodin E.F."/>
            <person name="Fricke W.F."/>
            <person name="Gajer P."/>
            <person name="Crabtree J."/>
            <person name="Sebaihia M."/>
            <person name="Thomson N.R."/>
            <person name="Chaudhuri R."/>
            <person name="Henderson I.R."/>
            <person name="Sperandio V."/>
            <person name="Ravel J."/>
        </authorList>
    </citation>
    <scope>NUCLEOTIDE SEQUENCE [LARGE SCALE GENOMIC DNA]</scope>
    <source>
        <strain>E24377A / ETEC</strain>
    </source>
</reference>
<evidence type="ECO:0000255" key="1">
    <source>
        <dbReference type="HAMAP-Rule" id="MF_00405"/>
    </source>
</evidence>
<feature type="chain" id="PRO_1000060821" description="3-hydroxydecanoyl-[acyl-carrier-protein] dehydratase">
    <location>
        <begin position="1"/>
        <end position="172"/>
    </location>
</feature>
<feature type="active site" evidence="1">
    <location>
        <position position="71"/>
    </location>
</feature>
<gene>
    <name evidence="1" type="primary">fabA</name>
    <name type="ordered locus">EcE24377A_1068</name>
</gene>
<proteinExistence type="inferred from homology"/>
<keyword id="KW-0963">Cytoplasm</keyword>
<keyword id="KW-0275">Fatty acid biosynthesis</keyword>
<keyword id="KW-0276">Fatty acid metabolism</keyword>
<keyword id="KW-0413">Isomerase</keyword>
<keyword id="KW-0444">Lipid biosynthesis</keyword>
<keyword id="KW-0443">Lipid metabolism</keyword>
<keyword id="KW-0456">Lyase</keyword>
<keyword id="KW-1185">Reference proteome</keyword>
<organism>
    <name type="scientific">Escherichia coli O139:H28 (strain E24377A / ETEC)</name>
    <dbReference type="NCBI Taxonomy" id="331111"/>
    <lineage>
        <taxon>Bacteria</taxon>
        <taxon>Pseudomonadati</taxon>
        <taxon>Pseudomonadota</taxon>
        <taxon>Gammaproteobacteria</taxon>
        <taxon>Enterobacterales</taxon>
        <taxon>Enterobacteriaceae</taxon>
        <taxon>Escherichia</taxon>
    </lineage>
</organism>
<name>FABA_ECO24</name>
<dbReference type="EC" id="4.2.1.59" evidence="1"/>
<dbReference type="EC" id="5.3.3.14" evidence="1"/>
<dbReference type="EMBL" id="CP000800">
    <property type="protein sequence ID" value="ABV19295.1"/>
    <property type="molecule type" value="Genomic_DNA"/>
</dbReference>
<dbReference type="RefSeq" id="WP_000227927.1">
    <property type="nucleotide sequence ID" value="NC_009801.1"/>
</dbReference>
<dbReference type="SMR" id="A7ZK57"/>
<dbReference type="GeneID" id="93776460"/>
<dbReference type="KEGG" id="ecw:EcE24377A_1068"/>
<dbReference type="HOGENOM" id="CLU_097925_0_0_6"/>
<dbReference type="UniPathway" id="UPA00094"/>
<dbReference type="Proteomes" id="UP000001122">
    <property type="component" value="Chromosome"/>
</dbReference>
<dbReference type="GO" id="GO:0005737">
    <property type="term" value="C:cytoplasm"/>
    <property type="evidence" value="ECO:0007669"/>
    <property type="project" value="UniProtKB-SubCell"/>
</dbReference>
<dbReference type="GO" id="GO:0019171">
    <property type="term" value="F:(3R)-hydroxyacyl-[acyl-carrier-protein] dehydratase activity"/>
    <property type="evidence" value="ECO:0007669"/>
    <property type="project" value="UniProtKB-UniRule"/>
</dbReference>
<dbReference type="GO" id="GO:0034017">
    <property type="term" value="F:trans-2-decenoyl-acyl-carrier-protein isomerase activity"/>
    <property type="evidence" value="ECO:0007669"/>
    <property type="project" value="UniProtKB-UniRule"/>
</dbReference>
<dbReference type="GO" id="GO:0006636">
    <property type="term" value="P:unsaturated fatty acid biosynthetic process"/>
    <property type="evidence" value="ECO:0007669"/>
    <property type="project" value="UniProtKB-UniRule"/>
</dbReference>
<dbReference type="CDD" id="cd01287">
    <property type="entry name" value="FabA"/>
    <property type="match status" value="1"/>
</dbReference>
<dbReference type="FunFam" id="3.10.129.10:FF:000003">
    <property type="entry name" value="3-hydroxydecanoyl-[acyl-carrier-protein] dehydratase"/>
    <property type="match status" value="1"/>
</dbReference>
<dbReference type="Gene3D" id="3.10.129.10">
    <property type="entry name" value="Hotdog Thioesterase"/>
    <property type="match status" value="1"/>
</dbReference>
<dbReference type="HAMAP" id="MF_00405">
    <property type="entry name" value="FabA"/>
    <property type="match status" value="1"/>
</dbReference>
<dbReference type="InterPro" id="IPR010083">
    <property type="entry name" value="FabA"/>
</dbReference>
<dbReference type="InterPro" id="IPR013114">
    <property type="entry name" value="FabA_FabZ"/>
</dbReference>
<dbReference type="InterPro" id="IPR029069">
    <property type="entry name" value="HotDog_dom_sf"/>
</dbReference>
<dbReference type="NCBIfam" id="TIGR01749">
    <property type="entry name" value="fabA"/>
    <property type="match status" value="1"/>
</dbReference>
<dbReference type="NCBIfam" id="NF003509">
    <property type="entry name" value="PRK05174.1"/>
    <property type="match status" value="1"/>
</dbReference>
<dbReference type="PANTHER" id="PTHR30272">
    <property type="entry name" value="3-HYDROXYACYL-[ACYL-CARRIER-PROTEIN] DEHYDRATASE"/>
    <property type="match status" value="1"/>
</dbReference>
<dbReference type="PANTHER" id="PTHR30272:SF8">
    <property type="entry name" value="3-HYDROXYDECANOYL-[ACYL-CARRIER-PROTEIN] DEHYDRATASE"/>
    <property type="match status" value="1"/>
</dbReference>
<dbReference type="Pfam" id="PF07977">
    <property type="entry name" value="FabA"/>
    <property type="match status" value="1"/>
</dbReference>
<dbReference type="SUPFAM" id="SSF54637">
    <property type="entry name" value="Thioesterase/thiol ester dehydrase-isomerase"/>
    <property type="match status" value="1"/>
</dbReference>
<sequence length="172" mass="18969">MVDKRESYTKEDLLASGRGELFGAKGPQLPAPNMLMMDRVVKMTETGGNFDKGYVEAELDINPDLWFFGCHFIGDPVMPGCLGLDAMWQLVGFYLGWLGGEGKGRALGVGEVKFTGQVLPTAKKVTYRIHFKRIVNRRLIMGLADGEVLVDGRLIYTASDLKVGLFQDTSAF</sequence>